<proteinExistence type="evidence at protein level"/>
<sequence>MFGAFVSHRLWSDSGCTTTCITNSIANYVAFGEQIGFPFKSAQVFIAGPRKAVINIQEDDKVELLKMIVKHNLWVVAHGTYLDVPWSRRSAFVTHFIQQELLICKEVGIKGLVLHLGAVEPELIVEGLKKIKPVEGVVIYLETPHNKHHTYKYSTMEQIKELFLRIRNTRLKQIGLCIDTAHIWSSGVNISSYNDAGQWLRSLENIHSVIPPSHIMFHLNDAATECGSGIDRHASLFEGMIWKSYSHKIKQSGLYCFVEYITRHQCPAILERNLGSSMQLQTALTAEFTTLKSLLK</sequence>
<organismHost>
    <name type="scientific">Ornithodoros</name>
    <name type="common">relapsing fever ticks</name>
    <dbReference type="NCBI Taxonomy" id="6937"/>
</organismHost>
<organismHost>
    <name type="scientific">Phacochoerus aethiopicus</name>
    <name type="common">Warthog</name>
    <dbReference type="NCBI Taxonomy" id="85517"/>
</organismHost>
<organismHost>
    <name type="scientific">Phacochoerus africanus</name>
    <name type="common">Warthog</name>
    <dbReference type="NCBI Taxonomy" id="41426"/>
</organismHost>
<organismHost>
    <name type="scientific">Potamochoerus larvatus</name>
    <name type="common">Bushpig</name>
    <dbReference type="NCBI Taxonomy" id="273792"/>
</organismHost>
<organismHost>
    <name type="scientific">Sus scrofa</name>
    <name type="common">Pig</name>
    <dbReference type="NCBI Taxonomy" id="9823"/>
</organismHost>
<name>APE_ASFP4</name>
<feature type="chain" id="PRO_0000373139" description="Probable AP endonuclease">
    <location>
        <begin position="1"/>
        <end position="296"/>
    </location>
</feature>
<feature type="binding site" evidence="4">
    <location>
        <position position="78"/>
    </location>
    <ligand>
        <name>Zn(2+)</name>
        <dbReference type="ChEBI" id="CHEBI:29105"/>
        <label>1</label>
    </ligand>
</feature>
<feature type="binding site" evidence="4">
    <location>
        <position position="115"/>
    </location>
    <ligand>
        <name>Zn(2+)</name>
        <dbReference type="ChEBI" id="CHEBI:29105"/>
        <label>2</label>
    </ligand>
</feature>
<feature type="binding site" evidence="3 4">
    <location>
        <position position="142"/>
    </location>
    <ligand>
        <name>Zn(2+)</name>
        <dbReference type="ChEBI" id="CHEBI:29105"/>
        <label>2</label>
    </ligand>
</feature>
<feature type="binding site" evidence="3 4">
    <location>
        <position position="182"/>
    </location>
    <ligand>
        <name>Zn(2+)</name>
        <dbReference type="ChEBI" id="CHEBI:29105"/>
        <label>3</label>
    </ligand>
</feature>
<feature type="binding site" evidence="3 4">
    <location>
        <position position="218"/>
    </location>
    <ligand>
        <name>Zn(2+)</name>
        <dbReference type="ChEBI" id="CHEBI:29105"/>
        <label>2</label>
    </ligand>
</feature>
<feature type="binding site" evidence="3 4">
    <location>
        <position position="231"/>
    </location>
    <ligand>
        <name>Zn(2+)</name>
        <dbReference type="ChEBI" id="CHEBI:29105"/>
        <label>3</label>
    </ligand>
</feature>
<feature type="binding site" evidence="3 4">
    <location>
        <position position="233"/>
    </location>
    <ligand>
        <name>Zn(2+)</name>
        <dbReference type="ChEBI" id="CHEBI:29105"/>
        <label>3</label>
    </ligand>
</feature>
<feature type="binding site" evidence="4">
    <location>
        <position position="271"/>
    </location>
    <ligand>
        <name>Zn(2+)</name>
        <dbReference type="ChEBI" id="CHEBI:29105"/>
        <label>1</label>
    </ligand>
</feature>
<feature type="disulfide bond" evidence="4">
    <location>
        <begin position="16"/>
        <end position="20"/>
    </location>
</feature>
<feature type="mutagenesis site" description="6-fold decrease in DNA binding and 2-fold decrease in cleavage activities; when associated with A-20." evidence="4">
    <original>C</original>
    <variation>A</variation>
    <location>
        <position position="16"/>
    </location>
</feature>
<feature type="mutagenesis site" description="6-fold decrease in DNA binding and 2-fold decrease in cleavage activities; when associated with A-16." evidence="4">
    <original>C</original>
    <variation>A</variation>
    <location>
        <position position="20"/>
    </location>
</feature>
<feature type="strand" evidence="7">
    <location>
        <begin position="1"/>
        <end position="5"/>
    </location>
</feature>
<feature type="helix" evidence="7">
    <location>
        <begin position="8"/>
        <end position="11"/>
    </location>
</feature>
<feature type="helix" evidence="7">
    <location>
        <begin position="20"/>
        <end position="34"/>
    </location>
</feature>
<feature type="strand" evidence="7">
    <location>
        <begin position="41"/>
        <end position="44"/>
    </location>
</feature>
<feature type="strand" evidence="7">
    <location>
        <begin position="49"/>
        <end position="52"/>
    </location>
</feature>
<feature type="helix" evidence="7">
    <location>
        <begin position="58"/>
        <end position="71"/>
    </location>
</feature>
<feature type="strand" evidence="7">
    <location>
        <begin position="74"/>
        <end position="78"/>
    </location>
</feature>
<feature type="strand" evidence="7">
    <location>
        <begin position="87"/>
        <end position="89"/>
    </location>
</feature>
<feature type="helix" evidence="7">
    <location>
        <begin position="91"/>
        <end position="107"/>
    </location>
</feature>
<feature type="strand" evidence="7">
    <location>
        <begin position="111"/>
        <end position="115"/>
    </location>
</feature>
<feature type="helix" evidence="7">
    <location>
        <begin position="121"/>
        <end position="129"/>
    </location>
</feature>
<feature type="strand" evidence="7">
    <location>
        <begin position="138"/>
        <end position="142"/>
    </location>
</feature>
<feature type="strand" evidence="7">
    <location>
        <begin position="147"/>
        <end position="150"/>
    </location>
</feature>
<feature type="helix" evidence="7">
    <location>
        <begin position="156"/>
        <end position="169"/>
    </location>
</feature>
<feature type="strand" evidence="7">
    <location>
        <begin position="173"/>
        <end position="179"/>
    </location>
</feature>
<feature type="helix" evidence="7">
    <location>
        <begin position="180"/>
        <end position="185"/>
    </location>
</feature>
<feature type="helix" evidence="7">
    <location>
        <begin position="193"/>
        <end position="204"/>
    </location>
</feature>
<feature type="turn" evidence="7">
    <location>
        <begin position="205"/>
        <end position="209"/>
    </location>
</feature>
<feature type="helix" evidence="7">
    <location>
        <begin position="212"/>
        <end position="214"/>
    </location>
</feature>
<feature type="strand" evidence="7">
    <location>
        <begin position="215"/>
        <end position="218"/>
    </location>
</feature>
<feature type="strand" evidence="7">
    <location>
        <begin position="221"/>
        <end position="224"/>
    </location>
</feature>
<feature type="turn" evidence="6">
    <location>
        <begin position="236"/>
        <end position="238"/>
    </location>
</feature>
<feature type="turn" evidence="7">
    <location>
        <begin position="240"/>
        <end position="242"/>
    </location>
</feature>
<feature type="helix" evidence="7">
    <location>
        <begin position="243"/>
        <end position="245"/>
    </location>
</feature>
<feature type="strand" evidence="7">
    <location>
        <begin position="246"/>
        <end position="248"/>
    </location>
</feature>
<feature type="helix" evidence="7">
    <location>
        <begin position="249"/>
        <end position="251"/>
    </location>
</feature>
<feature type="helix" evidence="7">
    <location>
        <begin position="253"/>
        <end position="264"/>
    </location>
</feature>
<feature type="strand" evidence="7">
    <location>
        <begin position="267"/>
        <end position="270"/>
    </location>
</feature>
<feature type="helix" evidence="7">
    <location>
        <begin position="277"/>
        <end position="295"/>
    </location>
</feature>
<accession>P0C9C6</accession>
<evidence type="ECO:0000250" key="1"/>
<evidence type="ECO:0000250" key="2">
    <source>
        <dbReference type="UniProtKB" id="Q65202"/>
    </source>
</evidence>
<evidence type="ECO:0000255" key="3">
    <source>
        <dbReference type="PROSITE-ProRule" id="PRU00763"/>
    </source>
</evidence>
<evidence type="ECO:0000269" key="4">
    <source>
    </source>
</evidence>
<evidence type="ECO:0000305" key="5"/>
<evidence type="ECO:0007829" key="6">
    <source>
        <dbReference type="PDB" id="6KHY"/>
    </source>
</evidence>
<evidence type="ECO:0007829" key="7">
    <source>
        <dbReference type="PDB" id="6KI3"/>
    </source>
</evidence>
<organism>
    <name type="scientific">African swine fever virus (isolate Tick/South Africa/Pretoriuskop Pr4/1996)</name>
    <name type="common">ASFV</name>
    <dbReference type="NCBI Taxonomy" id="561443"/>
    <lineage>
        <taxon>Viruses</taxon>
        <taxon>Varidnaviria</taxon>
        <taxon>Bamfordvirae</taxon>
        <taxon>Nucleocytoviricota</taxon>
        <taxon>Pokkesviricetes</taxon>
        <taxon>Asfuvirales</taxon>
        <taxon>Asfarviridae</taxon>
        <taxon>Asfivirus</taxon>
        <taxon>African swine fever virus</taxon>
    </lineage>
</organism>
<keyword id="KW-0002">3D-structure</keyword>
<keyword id="KW-1015">Disulfide bond</keyword>
<keyword id="KW-0227">DNA damage</keyword>
<keyword id="KW-0234">DNA repair</keyword>
<keyword id="KW-0244">Early protein</keyword>
<keyword id="KW-0255">Endonuclease</keyword>
<keyword id="KW-0269">Exonuclease</keyword>
<keyword id="KW-1035">Host cytoplasm</keyword>
<keyword id="KW-1048">Host nucleus</keyword>
<keyword id="KW-0378">Hydrolase</keyword>
<keyword id="KW-0479">Metal-binding</keyword>
<keyword id="KW-0540">Nuclease</keyword>
<keyword id="KW-0946">Virion</keyword>
<keyword id="KW-0862">Zinc</keyword>
<gene>
    <name type="ordered locus">Pret-146</name>
</gene>
<reference key="1">
    <citation type="submission" date="2003-03" db="EMBL/GenBank/DDBJ databases">
        <title>African swine fever virus genomes.</title>
        <authorList>
            <person name="Kutish G.F."/>
            <person name="Rock D.L."/>
        </authorList>
    </citation>
    <scope>NUCLEOTIDE SEQUENCE [GENOMIC DNA]</scope>
</reference>
<reference key="2">
    <citation type="journal article" date="2020" name="Cell Discov.">
        <title>A unique DNA-binding mode of African swine fever virus AP endonuclease.</title>
        <authorList>
            <person name="Chen Y."/>
            <person name="Chen X."/>
            <person name="Huang Q."/>
            <person name="Shao Z."/>
            <person name="Gao Y."/>
            <person name="Li Y."/>
            <person name="Yang C."/>
            <person name="Liu H."/>
            <person name="Li J."/>
            <person name="Wang Q."/>
            <person name="Ma J."/>
            <person name="Zhang Y.Z."/>
            <person name="Gu Y."/>
            <person name="Gan J."/>
        </authorList>
    </citation>
    <scope>X-RAY CRYSTALLOGRAPHY (2.35 ANGSTROMS)</scope>
    <scope>DNA-BINDING</scope>
    <scope>DISULFIDE BOND</scope>
    <scope>BIOPHYSICOCHEMICAL PROPERTIES</scope>
    <scope>COFACTOR</scope>
    <scope>MUTAGENESIS OF CYS-16 AND CYS-20</scope>
</reference>
<dbReference type="EC" id="3.1.21.-" evidence="2"/>
<dbReference type="EMBL" id="AY261363">
    <property type="status" value="NOT_ANNOTATED_CDS"/>
    <property type="molecule type" value="Genomic_DNA"/>
</dbReference>
<dbReference type="PDB" id="6KHY">
    <property type="method" value="X-ray"/>
    <property type="resolution" value="3.01 A"/>
    <property type="chains" value="A/B/C/D=1-296"/>
</dbReference>
<dbReference type="PDB" id="6KI3">
    <property type="method" value="X-ray"/>
    <property type="resolution" value="2.35 A"/>
    <property type="chains" value="A/B=1-296"/>
</dbReference>
<dbReference type="PDBsum" id="6KHY"/>
<dbReference type="PDBsum" id="6KI3"/>
<dbReference type="SMR" id="P0C9C6"/>
<dbReference type="Proteomes" id="UP000000859">
    <property type="component" value="Segment"/>
</dbReference>
<dbReference type="GO" id="GO:0030430">
    <property type="term" value="C:host cell cytoplasm"/>
    <property type="evidence" value="ECO:0007669"/>
    <property type="project" value="UniProtKB-SubCell"/>
</dbReference>
<dbReference type="GO" id="GO:0042025">
    <property type="term" value="C:host cell nucleus"/>
    <property type="evidence" value="ECO:0007669"/>
    <property type="project" value="UniProtKB-SubCell"/>
</dbReference>
<dbReference type="GO" id="GO:0044423">
    <property type="term" value="C:virion component"/>
    <property type="evidence" value="ECO:0007669"/>
    <property type="project" value="UniProtKB-KW"/>
</dbReference>
<dbReference type="GO" id="GO:0003677">
    <property type="term" value="F:DNA binding"/>
    <property type="evidence" value="ECO:0007669"/>
    <property type="project" value="InterPro"/>
</dbReference>
<dbReference type="GO" id="GO:0003906">
    <property type="term" value="F:DNA-(apurinic or apyrimidinic site) endonuclease activity"/>
    <property type="evidence" value="ECO:0007669"/>
    <property type="project" value="TreeGrafter"/>
</dbReference>
<dbReference type="GO" id="GO:0004519">
    <property type="term" value="F:endonuclease activity"/>
    <property type="evidence" value="ECO:0007669"/>
    <property type="project" value="UniProtKB-KW"/>
</dbReference>
<dbReference type="GO" id="GO:0004527">
    <property type="term" value="F:exonuclease activity"/>
    <property type="evidence" value="ECO:0007669"/>
    <property type="project" value="UniProtKB-KW"/>
</dbReference>
<dbReference type="GO" id="GO:0008081">
    <property type="term" value="F:phosphoric diester hydrolase activity"/>
    <property type="evidence" value="ECO:0007669"/>
    <property type="project" value="TreeGrafter"/>
</dbReference>
<dbReference type="GO" id="GO:0008270">
    <property type="term" value="F:zinc ion binding"/>
    <property type="evidence" value="ECO:0007669"/>
    <property type="project" value="InterPro"/>
</dbReference>
<dbReference type="GO" id="GO:0006284">
    <property type="term" value="P:base-excision repair"/>
    <property type="evidence" value="ECO:0007669"/>
    <property type="project" value="TreeGrafter"/>
</dbReference>
<dbReference type="CDD" id="cd00019">
    <property type="entry name" value="AP2Ec"/>
    <property type="match status" value="1"/>
</dbReference>
<dbReference type="FunFam" id="3.20.20.150:FF:000028">
    <property type="entry name" value="Probable AP endonuclease"/>
    <property type="match status" value="1"/>
</dbReference>
<dbReference type="Gene3D" id="3.20.20.150">
    <property type="entry name" value="Divalent-metal-dependent TIM barrel enzymes"/>
    <property type="match status" value="1"/>
</dbReference>
<dbReference type="InterPro" id="IPR001719">
    <property type="entry name" value="AP_endonuc_2"/>
</dbReference>
<dbReference type="InterPro" id="IPR018246">
    <property type="entry name" value="AP_endonuc_F2_Zn_BS"/>
</dbReference>
<dbReference type="InterPro" id="IPR036237">
    <property type="entry name" value="Xyl_isomerase-like_sf"/>
</dbReference>
<dbReference type="InterPro" id="IPR013022">
    <property type="entry name" value="Xyl_isomerase-like_TIM-brl"/>
</dbReference>
<dbReference type="PANTHER" id="PTHR21445:SF0">
    <property type="entry name" value="APURINIC-APYRIMIDINIC ENDONUCLEASE"/>
    <property type="match status" value="1"/>
</dbReference>
<dbReference type="PANTHER" id="PTHR21445">
    <property type="entry name" value="ENDONUCLEASE IV ENDODEOXYRIBONUCLEASE IV"/>
    <property type="match status" value="1"/>
</dbReference>
<dbReference type="Pfam" id="PF01261">
    <property type="entry name" value="AP_endonuc_2"/>
    <property type="match status" value="1"/>
</dbReference>
<dbReference type="SMART" id="SM00518">
    <property type="entry name" value="AP2Ec"/>
    <property type="match status" value="1"/>
</dbReference>
<dbReference type="SUPFAM" id="SSF51658">
    <property type="entry name" value="Xylose isomerase-like"/>
    <property type="match status" value="1"/>
</dbReference>
<dbReference type="PROSITE" id="PS00731">
    <property type="entry name" value="AP_NUCLEASE_F2_3"/>
    <property type="match status" value="1"/>
</dbReference>
<dbReference type="PROSITE" id="PS51432">
    <property type="entry name" value="AP_NUCLEASE_F2_4"/>
    <property type="match status" value="1"/>
</dbReference>
<comment type="function">
    <text evidence="2 5">Endonuclease that plays a role in DNA repair (By similarity). Cleaves phosphodiester bonds on the 5' side of apurinic or apyrimidinic sites (AP sites) (By similarity). In addition to endonuclease activity, the ASFV enzyme has a proofreading 3'-5' exonuclease activity that is considerably more efficient in the elimination of a mismatch than in that of a correctly paired base (By similarity). Displays 3'-phosphatase and 3'-repair diesterase activities (By similarity). The single nucleotide gaps generated by the AP endonuclease are filled by the viral AP endonuclease and DNA ligase (Probable).</text>
</comment>
<comment type="cofactor">
    <cofactor evidence="3 4">
        <name>Zn(2+)</name>
        <dbReference type="ChEBI" id="CHEBI:29105"/>
    </cofactor>
    <text evidence="4">Binds 3 Zn(2+) ions.</text>
</comment>
<comment type="biophysicochemical properties">
    <phDependence>
        <text evidence="4">Optimum pH is 6.3.</text>
    </phDependence>
</comment>
<comment type="subcellular location">
    <subcellularLocation>
        <location evidence="2">Host nucleus</location>
    </subcellularLocation>
    <subcellularLocation>
        <location evidence="2">Host cytoplasm</location>
    </subcellularLocation>
    <subcellularLocation>
        <location evidence="2">Virion</location>
    </subcellularLocation>
    <text evidence="2">The early enzyme is localized in the nucleus and the cytoplasm, while the late protein is found only in the cytoplasm (By similarity). Found in association with viral nucleoid (By similarity).</text>
</comment>
<comment type="induction">
    <text evidence="5">Expressed in the early phase of the viral replicative cycle and accumulates at later times.</text>
</comment>
<comment type="miscellaneous">
    <text evidence="1">Consistent with its intracellular location, ASFV encodes its own replicative DNA polymerase and three base excision repair enzymes: a class II AP endonuclease, the repair polymerase Pol X, and an ATP-dependent DNA ligase.</text>
</comment>
<comment type="miscellaneous">
    <text evidence="1">During infection, the protein is expressed at early times and accumulates at later times.</text>
</comment>
<comment type="similarity">
    <text evidence="3">Belongs to the AP endonuclease 2 family.</text>
</comment>
<protein>
    <recommendedName>
        <fullName evidence="2">Probable AP endonuclease</fullName>
        <shortName evidence="2">APE</shortName>
        <ecNumber evidence="2">3.1.21.-</ecNumber>
    </recommendedName>
</protein>